<gene>
    <name type="ordered locus">Os03g0179100</name>
    <name type="ordered locus">LOC_Os03g08150</name>
    <name type="ORF">OsJ_009284</name>
    <name type="ORF">OSJNBa0050H14.9</name>
</gene>
<sequence length="225" mass="23586">MRAAVAHRILLSLALFAVLCRCDPDLLFDYCVADTAAATAAGAFHLNGLACIDPALARADHFATSALSRATNPAATLYGFNATLTSPAASLPGANAQGLAMARIDLAPGGMAPPHSHPRASEAALVLSGSVLVGFADTSYRLYTQLLRAGEAFVFPRAMVHFLYNMDTAAPAVVLSGLNSQSPGAQLVPFSAFRTEPRLPDEVLKKAFKITGQDVQRIQKHLGGL</sequence>
<protein>
    <recommendedName>
        <fullName>Germin-like protein 3-1</fullName>
    </recommendedName>
</protein>
<keyword id="KW-0052">Apoplast</keyword>
<keyword id="KW-1015">Disulfide bond</keyword>
<keyword id="KW-0325">Glycoprotein</keyword>
<keyword id="KW-0464">Manganese</keyword>
<keyword id="KW-0479">Metal-binding</keyword>
<keyword id="KW-1185">Reference proteome</keyword>
<keyword id="KW-0964">Secreted</keyword>
<keyword id="KW-0732">Signal</keyword>
<comment type="function">
    <text>May play a role in plant defense. Probably has no oxalate oxidase activity even if the active site is conserved.</text>
</comment>
<comment type="subunit">
    <text evidence="1">Oligomer (believed to be a pentamer but probably hexamer).</text>
</comment>
<comment type="subcellular location">
    <subcellularLocation>
        <location evidence="1">Secreted</location>
        <location evidence="1">Extracellular space</location>
        <location evidence="1">Apoplast</location>
    </subcellularLocation>
</comment>
<comment type="similarity">
    <text evidence="3">Belongs to the germin family.</text>
</comment>
<feature type="signal peptide" evidence="2">
    <location>
        <begin position="1"/>
        <end position="22"/>
    </location>
</feature>
<feature type="chain" id="PRO_0000365502" description="Germin-like protein 3-1">
    <location>
        <begin position="23"/>
        <end position="225"/>
    </location>
</feature>
<feature type="domain" description="Cupin type-1" evidence="2">
    <location>
        <begin position="65"/>
        <end position="216"/>
    </location>
</feature>
<feature type="binding site" evidence="1">
    <location>
        <position position="115"/>
    </location>
    <ligand>
        <name>Mn(2+)</name>
        <dbReference type="ChEBI" id="CHEBI:29035"/>
    </ligand>
</feature>
<feature type="binding site" evidence="1">
    <location>
        <position position="117"/>
    </location>
    <ligand>
        <name>Mn(2+)</name>
        <dbReference type="ChEBI" id="CHEBI:29035"/>
    </ligand>
</feature>
<feature type="binding site" evidence="1">
    <location>
        <position position="122"/>
    </location>
    <ligand>
        <name>Mn(2+)</name>
        <dbReference type="ChEBI" id="CHEBI:29035"/>
    </ligand>
</feature>
<feature type="binding site" evidence="1">
    <location>
        <position position="161"/>
    </location>
    <ligand>
        <name>Mn(2+)</name>
        <dbReference type="ChEBI" id="CHEBI:29035"/>
    </ligand>
</feature>
<feature type="glycosylation site" description="N-linked (GlcNAc...) asparagine" evidence="2">
    <location>
        <position position="81"/>
    </location>
</feature>
<feature type="disulfide bond" evidence="1">
    <location>
        <begin position="31"/>
        <end position="51"/>
    </location>
</feature>
<reference key="1">
    <citation type="journal article" date="2005" name="Genome Res.">
        <title>Sequence, annotation, and analysis of synteny between rice chromosome 3 and diverged grass species.</title>
        <authorList>
            <consortium name="The rice chromosome 3 sequencing consortium"/>
            <person name="Buell C.R."/>
            <person name="Yuan Q."/>
            <person name="Ouyang S."/>
            <person name="Liu J."/>
            <person name="Zhu W."/>
            <person name="Wang A."/>
            <person name="Maiti R."/>
            <person name="Haas B."/>
            <person name="Wortman J."/>
            <person name="Pertea M."/>
            <person name="Jones K.M."/>
            <person name="Kim M."/>
            <person name="Overton L."/>
            <person name="Tsitrin T."/>
            <person name="Fadrosh D."/>
            <person name="Bera J."/>
            <person name="Weaver B."/>
            <person name="Jin S."/>
            <person name="Johri S."/>
            <person name="Reardon M."/>
            <person name="Webb K."/>
            <person name="Hill J."/>
            <person name="Moffat K."/>
            <person name="Tallon L."/>
            <person name="Van Aken S."/>
            <person name="Lewis M."/>
            <person name="Utterback T."/>
            <person name="Feldblyum T."/>
            <person name="Zismann V."/>
            <person name="Iobst S."/>
            <person name="Hsiao J."/>
            <person name="de Vazeille A.R."/>
            <person name="Salzberg S.L."/>
            <person name="White O."/>
            <person name="Fraser C.M."/>
            <person name="Yu Y."/>
            <person name="Kim H."/>
            <person name="Rambo T."/>
            <person name="Currie J."/>
            <person name="Collura K."/>
            <person name="Kernodle-Thompson S."/>
            <person name="Wei F."/>
            <person name="Kudrna K."/>
            <person name="Ammiraju J.S.S."/>
            <person name="Luo M."/>
            <person name="Goicoechea J.L."/>
            <person name="Wing R.A."/>
            <person name="Henry D."/>
            <person name="Oates R."/>
            <person name="Palmer M."/>
            <person name="Pries G."/>
            <person name="Saski C."/>
            <person name="Simmons J."/>
            <person name="Soderlund C."/>
            <person name="Nelson W."/>
            <person name="de la Bastide M."/>
            <person name="Spiegel L."/>
            <person name="Nascimento L."/>
            <person name="Huang E."/>
            <person name="Preston R."/>
            <person name="Zutavern T."/>
            <person name="Palmer L."/>
            <person name="O'Shaughnessy A."/>
            <person name="Dike S."/>
            <person name="McCombie W.R."/>
            <person name="Minx P."/>
            <person name="Cordum H."/>
            <person name="Wilson R."/>
            <person name="Jin W."/>
            <person name="Lee H.R."/>
            <person name="Jiang J."/>
            <person name="Jackson S."/>
        </authorList>
    </citation>
    <scope>NUCLEOTIDE SEQUENCE [LARGE SCALE GENOMIC DNA]</scope>
    <source>
        <strain>cv. Nipponbare</strain>
    </source>
</reference>
<reference key="2">
    <citation type="journal article" date="2005" name="Nature">
        <title>The map-based sequence of the rice genome.</title>
        <authorList>
            <consortium name="International rice genome sequencing project (IRGSP)"/>
        </authorList>
    </citation>
    <scope>NUCLEOTIDE SEQUENCE [LARGE SCALE GENOMIC DNA]</scope>
    <source>
        <strain>cv. Nipponbare</strain>
    </source>
</reference>
<reference key="3">
    <citation type="journal article" date="2013" name="Rice">
        <title>Improvement of the Oryza sativa Nipponbare reference genome using next generation sequence and optical map data.</title>
        <authorList>
            <person name="Kawahara Y."/>
            <person name="de la Bastide M."/>
            <person name="Hamilton J.P."/>
            <person name="Kanamori H."/>
            <person name="McCombie W.R."/>
            <person name="Ouyang S."/>
            <person name="Schwartz D.C."/>
            <person name="Tanaka T."/>
            <person name="Wu J."/>
            <person name="Zhou S."/>
            <person name="Childs K.L."/>
            <person name="Davidson R.M."/>
            <person name="Lin H."/>
            <person name="Quesada-Ocampo L."/>
            <person name="Vaillancourt B."/>
            <person name="Sakai H."/>
            <person name="Lee S.S."/>
            <person name="Kim J."/>
            <person name="Numa H."/>
            <person name="Itoh T."/>
            <person name="Buell C.R."/>
            <person name="Matsumoto T."/>
        </authorList>
    </citation>
    <scope>GENOME REANNOTATION</scope>
    <source>
        <strain>cv. Nipponbare</strain>
    </source>
</reference>
<reference key="4">
    <citation type="journal article" date="2005" name="PLoS Biol.">
        <title>The genomes of Oryza sativa: a history of duplications.</title>
        <authorList>
            <person name="Yu J."/>
            <person name="Wang J."/>
            <person name="Lin W."/>
            <person name="Li S."/>
            <person name="Li H."/>
            <person name="Zhou J."/>
            <person name="Ni P."/>
            <person name="Dong W."/>
            <person name="Hu S."/>
            <person name="Zeng C."/>
            <person name="Zhang J."/>
            <person name="Zhang Y."/>
            <person name="Li R."/>
            <person name="Xu Z."/>
            <person name="Li S."/>
            <person name="Li X."/>
            <person name="Zheng H."/>
            <person name="Cong L."/>
            <person name="Lin L."/>
            <person name="Yin J."/>
            <person name="Geng J."/>
            <person name="Li G."/>
            <person name="Shi J."/>
            <person name="Liu J."/>
            <person name="Lv H."/>
            <person name="Li J."/>
            <person name="Wang J."/>
            <person name="Deng Y."/>
            <person name="Ran L."/>
            <person name="Shi X."/>
            <person name="Wang X."/>
            <person name="Wu Q."/>
            <person name="Li C."/>
            <person name="Ren X."/>
            <person name="Wang J."/>
            <person name="Wang X."/>
            <person name="Li D."/>
            <person name="Liu D."/>
            <person name="Zhang X."/>
            <person name="Ji Z."/>
            <person name="Zhao W."/>
            <person name="Sun Y."/>
            <person name="Zhang Z."/>
            <person name="Bao J."/>
            <person name="Han Y."/>
            <person name="Dong L."/>
            <person name="Ji J."/>
            <person name="Chen P."/>
            <person name="Wu S."/>
            <person name="Liu J."/>
            <person name="Xiao Y."/>
            <person name="Bu D."/>
            <person name="Tan J."/>
            <person name="Yang L."/>
            <person name="Ye C."/>
            <person name="Zhang J."/>
            <person name="Xu J."/>
            <person name="Zhou Y."/>
            <person name="Yu Y."/>
            <person name="Zhang B."/>
            <person name="Zhuang S."/>
            <person name="Wei H."/>
            <person name="Liu B."/>
            <person name="Lei M."/>
            <person name="Yu H."/>
            <person name="Li Y."/>
            <person name="Xu H."/>
            <person name="Wei S."/>
            <person name="He X."/>
            <person name="Fang L."/>
            <person name="Zhang Z."/>
            <person name="Zhang Y."/>
            <person name="Huang X."/>
            <person name="Su Z."/>
            <person name="Tong W."/>
            <person name="Li J."/>
            <person name="Tong Z."/>
            <person name="Li S."/>
            <person name="Ye J."/>
            <person name="Wang L."/>
            <person name="Fang L."/>
            <person name="Lei T."/>
            <person name="Chen C.-S."/>
            <person name="Chen H.-C."/>
            <person name="Xu Z."/>
            <person name="Li H."/>
            <person name="Huang H."/>
            <person name="Zhang F."/>
            <person name="Xu H."/>
            <person name="Li N."/>
            <person name="Zhao C."/>
            <person name="Li S."/>
            <person name="Dong L."/>
            <person name="Huang Y."/>
            <person name="Li L."/>
            <person name="Xi Y."/>
            <person name="Qi Q."/>
            <person name="Li W."/>
            <person name="Zhang B."/>
            <person name="Hu W."/>
            <person name="Zhang Y."/>
            <person name="Tian X."/>
            <person name="Jiao Y."/>
            <person name="Liang X."/>
            <person name="Jin J."/>
            <person name="Gao L."/>
            <person name="Zheng W."/>
            <person name="Hao B."/>
            <person name="Liu S.-M."/>
            <person name="Wang W."/>
            <person name="Yuan L."/>
            <person name="Cao M."/>
            <person name="McDermott J."/>
            <person name="Samudrala R."/>
            <person name="Wang J."/>
            <person name="Wong G.K.-S."/>
            <person name="Yang H."/>
        </authorList>
    </citation>
    <scope>NUCLEOTIDE SEQUENCE [LARGE SCALE GENOMIC DNA]</scope>
    <source>
        <strain>cv. Nipponbare</strain>
    </source>
</reference>
<evidence type="ECO:0000250" key="1"/>
<evidence type="ECO:0000255" key="2"/>
<evidence type="ECO:0000305" key="3"/>
<name>GL31_ORYSJ</name>
<proteinExistence type="inferred from homology"/>
<organism>
    <name type="scientific">Oryza sativa subsp. japonica</name>
    <name type="common">Rice</name>
    <dbReference type="NCBI Taxonomy" id="39947"/>
    <lineage>
        <taxon>Eukaryota</taxon>
        <taxon>Viridiplantae</taxon>
        <taxon>Streptophyta</taxon>
        <taxon>Embryophyta</taxon>
        <taxon>Tracheophyta</taxon>
        <taxon>Spermatophyta</taxon>
        <taxon>Magnoliopsida</taxon>
        <taxon>Liliopsida</taxon>
        <taxon>Poales</taxon>
        <taxon>Poaceae</taxon>
        <taxon>BOP clade</taxon>
        <taxon>Oryzoideae</taxon>
        <taxon>Oryzeae</taxon>
        <taxon>Oryzinae</taxon>
        <taxon>Oryza</taxon>
        <taxon>Oryza sativa</taxon>
    </lineage>
</organism>
<accession>Q8H021</accession>
<accession>A0A0P0VU11</accession>
<dbReference type="EMBL" id="AC125472">
    <property type="protein sequence ID" value="AAO13469.1"/>
    <property type="molecule type" value="Genomic_DNA"/>
</dbReference>
<dbReference type="EMBL" id="DP000009">
    <property type="protein sequence ID" value="ABF94290.1"/>
    <property type="molecule type" value="Genomic_DNA"/>
</dbReference>
<dbReference type="EMBL" id="AP014959">
    <property type="protein sequence ID" value="BAS82603.1"/>
    <property type="molecule type" value="Genomic_DNA"/>
</dbReference>
<dbReference type="EMBL" id="CM000140">
    <property type="protein sequence ID" value="EAZ25801.1"/>
    <property type="molecule type" value="Genomic_DNA"/>
</dbReference>
<dbReference type="RefSeq" id="XP_015633295.1">
    <property type="nucleotide sequence ID" value="XM_015777809.1"/>
</dbReference>
<dbReference type="RefSeq" id="XP_015633297.1">
    <property type="nucleotide sequence ID" value="XM_015777811.1"/>
</dbReference>
<dbReference type="SMR" id="Q8H021"/>
<dbReference type="FunCoup" id="Q8H021">
    <property type="interactions" value="248"/>
</dbReference>
<dbReference type="STRING" id="39947.Q8H021"/>
<dbReference type="PaxDb" id="39947-Q8H021"/>
<dbReference type="EnsemblPlants" id="Os03t0179100-00">
    <property type="protein sequence ID" value="Os03t0179100-00"/>
    <property type="gene ID" value="Os03g0179100"/>
</dbReference>
<dbReference type="GeneID" id="107278121"/>
<dbReference type="Gramene" id="Os03t0179100-00">
    <property type="protein sequence ID" value="Os03t0179100-00"/>
    <property type="gene ID" value="Os03g0179100"/>
</dbReference>
<dbReference type="KEGG" id="osa:107278121"/>
<dbReference type="eggNOG" id="ENOG502QQ4A">
    <property type="taxonomic scope" value="Eukaryota"/>
</dbReference>
<dbReference type="HOGENOM" id="CLU_015790_0_3_1"/>
<dbReference type="InParanoid" id="Q8H021"/>
<dbReference type="OMA" id="MIHFLYN"/>
<dbReference type="OrthoDB" id="1921208at2759"/>
<dbReference type="Proteomes" id="UP000000763">
    <property type="component" value="Chromosome 3"/>
</dbReference>
<dbReference type="Proteomes" id="UP000007752">
    <property type="component" value="Chromosome 3"/>
</dbReference>
<dbReference type="Proteomes" id="UP000059680">
    <property type="component" value="Chromosome 3"/>
</dbReference>
<dbReference type="GO" id="GO:0048046">
    <property type="term" value="C:apoplast"/>
    <property type="evidence" value="ECO:0007669"/>
    <property type="project" value="UniProtKB-SubCell"/>
</dbReference>
<dbReference type="GO" id="GO:0030145">
    <property type="term" value="F:manganese ion binding"/>
    <property type="evidence" value="ECO:0007669"/>
    <property type="project" value="InterPro"/>
</dbReference>
<dbReference type="CDD" id="cd02241">
    <property type="entry name" value="cupin_OxOx"/>
    <property type="match status" value="1"/>
</dbReference>
<dbReference type="FunFam" id="2.60.120.10:FF:000025">
    <property type="entry name" value="germin-like protein subfamily 2 member 1"/>
    <property type="match status" value="1"/>
</dbReference>
<dbReference type="Gene3D" id="2.60.120.10">
    <property type="entry name" value="Jelly Rolls"/>
    <property type="match status" value="1"/>
</dbReference>
<dbReference type="InterPro" id="IPR006045">
    <property type="entry name" value="Cupin_1"/>
</dbReference>
<dbReference type="InterPro" id="IPR001929">
    <property type="entry name" value="Germin"/>
</dbReference>
<dbReference type="InterPro" id="IPR014710">
    <property type="entry name" value="RmlC-like_jellyroll"/>
</dbReference>
<dbReference type="InterPro" id="IPR011051">
    <property type="entry name" value="RmlC_Cupin_sf"/>
</dbReference>
<dbReference type="PANTHER" id="PTHR31238">
    <property type="entry name" value="GERMIN-LIKE PROTEIN SUBFAMILY 3 MEMBER 3"/>
    <property type="match status" value="1"/>
</dbReference>
<dbReference type="Pfam" id="PF00190">
    <property type="entry name" value="Cupin_1"/>
    <property type="match status" value="1"/>
</dbReference>
<dbReference type="PRINTS" id="PR00325">
    <property type="entry name" value="GERMIN"/>
</dbReference>
<dbReference type="SMART" id="SM00835">
    <property type="entry name" value="Cupin_1"/>
    <property type="match status" value="1"/>
</dbReference>
<dbReference type="SUPFAM" id="SSF51182">
    <property type="entry name" value="RmlC-like cupins"/>
    <property type="match status" value="1"/>
</dbReference>